<gene>
    <name type="primary">psaB</name>
    <name type="ordered locus">tlr0732</name>
</gene>
<keyword id="KW-0002">3D-structure</keyword>
<keyword id="KW-0004">4Fe-4S</keyword>
<keyword id="KW-0148">Chlorophyll</keyword>
<keyword id="KW-0157">Chromophore</keyword>
<keyword id="KW-0249">Electron transport</keyword>
<keyword id="KW-0408">Iron</keyword>
<keyword id="KW-0411">Iron-sulfur</keyword>
<keyword id="KW-0460">Magnesium</keyword>
<keyword id="KW-0472">Membrane</keyword>
<keyword id="KW-0479">Metal-binding</keyword>
<keyword id="KW-0560">Oxidoreductase</keyword>
<keyword id="KW-0602">Photosynthesis</keyword>
<keyword id="KW-0603">Photosystem I</keyword>
<keyword id="KW-1185">Reference proteome</keyword>
<keyword id="KW-0793">Thylakoid</keyword>
<keyword id="KW-0812">Transmembrane</keyword>
<keyword id="KW-1133">Transmembrane helix</keyword>
<keyword id="KW-0813">Transport</keyword>
<reference key="1">
    <citation type="journal article" date="2002" name="DNA Res.">
        <title>Complete genome structure of the thermophilic cyanobacterium Thermosynechococcus elongatus BP-1.</title>
        <authorList>
            <person name="Nakamura Y."/>
            <person name="Kaneko T."/>
            <person name="Sato S."/>
            <person name="Ikeuchi M."/>
            <person name="Katoh H."/>
            <person name="Sasamoto S."/>
            <person name="Watanabe A."/>
            <person name="Iriguchi M."/>
            <person name="Kawashima K."/>
            <person name="Kimura T."/>
            <person name="Kishida Y."/>
            <person name="Kiyokawa C."/>
            <person name="Kohara M."/>
            <person name="Matsumoto M."/>
            <person name="Matsuno A."/>
            <person name="Nakazaki N."/>
            <person name="Shimpo S."/>
            <person name="Sugimoto M."/>
            <person name="Takeuchi C."/>
            <person name="Yamada M."/>
            <person name="Tabata S."/>
        </authorList>
    </citation>
    <scope>NUCLEOTIDE SEQUENCE [LARGE SCALE GENOMIC DNA]</scope>
    <source>
        <strain>NIES-2133 / IAM M-273 / BP-1</strain>
    </source>
</reference>
<reference key="2">
    <citation type="journal article" date="2003" name="Eur. J. Biochem.">
        <title>Reversed-phase HPLC determination of chlorophyll a' and phylloquinone in photosystem I of oxygenic photosynthetic organisms.</title>
        <authorList>
            <person name="Nakamura A."/>
            <person name="Akai M."/>
            <person name="Yoshida E."/>
            <person name="Taki T."/>
            <person name="Watanabe T."/>
        </authorList>
    </citation>
    <scope>PRESENCE OF CHLOROPHYLL A' IN PSI</scope>
</reference>
<reference key="3">
    <citation type="journal article" date="2001" name="Biochim. Biophys. Acta">
        <title>Structure of photosystem I.</title>
        <authorList>
            <person name="Fromme P."/>
            <person name="Jordan P."/>
            <person name="Krauss N."/>
        </authorList>
    </citation>
    <scope>REVIEW</scope>
</reference>
<reference key="4">
    <citation type="journal article" date="1996" name="Nat. Struct. Biol.">
        <title>Photosystem I at 4-A resolution represents the first structural model of a joint photosynthetic reaction centre and core antenna system.</title>
        <authorList>
            <person name="Krauss N."/>
            <person name="Schubert W.-D."/>
            <person name="Klukas O."/>
            <person name="Fromme P."/>
            <person name="Witt H.T."/>
            <person name="Saenger W."/>
        </authorList>
    </citation>
    <scope>X-RAY CRYSTALLOGRAPHY (4.0 ANGSTROMS)</scope>
    <scope>FUNCTION</scope>
    <scope>CATALYTIC ACTIVITY</scope>
    <scope>COFACTOR</scope>
    <scope>SUBUNIT</scope>
    <scope>SUBCELLULAR LOCATION</scope>
</reference>
<reference key="5">
    <citation type="journal article" date="1999" name="J. Biol. Chem.">
        <title>Photosystem I, an improved model of the stromal subunits PsaC, PsaD, and PsaE.</title>
        <authorList>
            <person name="Klukas O."/>
            <person name="Schubert W.-D."/>
            <person name="Jordan P."/>
            <person name="Krauss N."/>
            <person name="Fromme P."/>
            <person name="Witt H.T."/>
            <person name="Saenger W."/>
        </authorList>
    </citation>
    <scope>X-RAY CRYSTALLOGRAPHY (4.0 ANGSTROMS)</scope>
    <scope>FUNCTION</scope>
    <scope>CATALYTIC ACTIVITY</scope>
    <scope>COFACTOR</scope>
    <scope>SUBUNIT</scope>
    <scope>SUBCELLULAR LOCATION</scope>
</reference>
<reference key="6">
    <citation type="journal article" date="1999" name="J. Biol. Chem.">
        <title>Localization of two phylloquinones, QK and QK', in an improved electron density map of photosystem I at 4-A resolution.</title>
        <authorList>
            <person name="Klukas O."/>
            <person name="Schubert W.-D."/>
            <person name="Jordan P."/>
            <person name="Krauss N."/>
            <person name="Fromme P."/>
            <person name="Witt H.T."/>
            <person name="Saenger W."/>
        </authorList>
    </citation>
    <scope>X-RAY CRYSTALLOGRAPHY (4.0 ANGSTROMS)</scope>
    <scope>FUNCTION</scope>
    <scope>CATALYTIC ACTIVITY</scope>
    <scope>COFACTOR</scope>
    <scope>SUBUNIT</scope>
    <scope>SUBCELLULAR LOCATION</scope>
</reference>
<reference key="7">
    <citation type="journal article" date="2001" name="Nature">
        <title>Three-dimensional structure of cyanobacterial photosystem I at 2.5 A resolution.</title>
        <authorList>
            <person name="Jordan P."/>
            <person name="Fromme P."/>
            <person name="Witt H.T."/>
            <person name="Klukas O."/>
            <person name="Saenger W."/>
            <person name="Krauss N."/>
        </authorList>
    </citation>
    <scope>X-RAY CRYSTALLOGRAPHY (2.5 ANGSTROMS) OF 2-741</scope>
    <scope>FUNCTION</scope>
    <scope>CATALYTIC ACTIVITY</scope>
    <scope>COFACTOR</scope>
    <scope>SUBUNIT</scope>
    <scope>SUBCELLULAR LOCATION</scope>
</reference>
<name>PSAB_THEVB</name>
<sequence>MATKFPKFSQDLAQDPTTRRIWYAIAMAHDFESHDGMTEENLYQKIFASHFGHLAIIFLWVSGSLFHVAWQGNFEQWVQDPVNTRPIAHAIWDPQFGKAAVDAFTQAGASNPVDIAYSGVYHWWYTIGMRTNGDLYQGAIFLLILASLALFAGWLHLQPKFRPSLSWFKNAESRLNHHLAGLFGVSSLAWAGHLIHVAIPESRGQHVGWDNFLSTMPHPAGLAPFFTGNWGVYAQNPDTASHVFGTAQGAGTAILTFLGGFHPQTESLWLTDMAHHHLAIAVLFIVAGHMYRTQFGIGHSIKEMMDAKDFFGTKVEGPFNMPHQGIYETYNNSLHFQLGWHLACLGVITSLVAQHMYSLPPYAFIAQDHTTMAALYTHHQYIAGFLMVGAFAHGAIFLVRDYDPAQNKGNVLDRVLQHKEAIISHLSWVSLFLGFHTLGLYVHNDVVVAFGTPEKQILIEPVFAQFIQAAHGKLLYGFDTLLSNPDSIASTAWPNYGNVWLPGWLDAINSGTNSLFLTIGPGDFLVHHAIALGLHTTTLILVKGALDARGSKLMPDKKDFGYAFPCDGPGRGGTCDISAWDAFYLAMFWMLNTIGWVTFYWHWKHLGVWEGNVAQFNESSTYLMGWLRDYLWLNSSQLINGYNPFGTNNLSVWAWMFLFGHLVWATGFMFLISWRGYWQELIETLVWAHERTPLANLVRWKDKPVALSIVQARLVGLAHFSVGYILTYAAFLIASTAAKFG</sequence>
<protein>
    <recommendedName>
        <fullName>Photosystem I P700 chlorophyll a apoprotein A2</fullName>
        <ecNumber evidence="2 3 4 5">1.97.1.12</ecNumber>
    </recommendedName>
    <alternativeName>
        <fullName>PsaB</fullName>
    </alternativeName>
</protein>
<dbReference type="EC" id="1.97.1.12" evidence="2 3 4 5"/>
<dbReference type="EMBL" id="BA000039">
    <property type="protein sequence ID" value="BAC08283.1"/>
    <property type="molecule type" value="Genomic_DNA"/>
</dbReference>
<dbReference type="RefSeq" id="NP_681521.1">
    <property type="nucleotide sequence ID" value="NC_004113.1"/>
</dbReference>
<dbReference type="RefSeq" id="WP_011056579.1">
    <property type="nucleotide sequence ID" value="NC_004113.1"/>
</dbReference>
<dbReference type="PDB" id="1C51">
    <property type="method" value="X-ray"/>
    <property type="resolution" value="4.00 A"/>
</dbReference>
<dbReference type="PDB" id="1JB0">
    <property type="method" value="X-ray"/>
    <property type="resolution" value="2.50 A"/>
    <property type="chains" value="B=2-741"/>
</dbReference>
<dbReference type="PDB" id="2PPS">
    <property type="method" value="X-ray"/>
    <property type="resolution" value="4.00 A"/>
</dbReference>
<dbReference type="PDB" id="3PCQ">
    <property type="method" value="X-ray"/>
    <property type="resolution" value="8.98 A"/>
    <property type="chains" value="B=2-741"/>
</dbReference>
<dbReference type="PDB" id="4FE1">
    <property type="method" value="X-ray"/>
    <property type="resolution" value="4.92 A"/>
    <property type="chains" value="B=2-741"/>
</dbReference>
<dbReference type="PDB" id="5ZF0">
    <property type="method" value="X-ray"/>
    <property type="resolution" value="4.20 A"/>
    <property type="chains" value="B1/B2/B3/B4/B5/B6=2-741"/>
</dbReference>
<dbReference type="PDB" id="6LU1">
    <property type="method" value="EM"/>
    <property type="resolution" value="3.20 A"/>
    <property type="chains" value="B=1-741"/>
</dbReference>
<dbReference type="PDB" id="6PFY">
    <property type="method" value="X-ray"/>
    <property type="resolution" value="2.90 A"/>
    <property type="chains" value="B/H/Z=1-741"/>
</dbReference>
<dbReference type="PDB" id="6PGK">
    <property type="method" value="X-ray"/>
    <property type="resolution" value="2.90 A"/>
    <property type="chains" value="B/H/Z=1-741"/>
</dbReference>
<dbReference type="PDB" id="6TRA">
    <property type="method" value="EM"/>
    <property type="resolution" value="2.85 A"/>
    <property type="chains" value="B=1-741"/>
</dbReference>
<dbReference type="PDB" id="6TRC">
    <property type="method" value="EM"/>
    <property type="resolution" value="2.98 A"/>
    <property type="chains" value="2/B/b=1-741"/>
</dbReference>
<dbReference type="PDB" id="6TRD">
    <property type="method" value="EM"/>
    <property type="resolution" value="3.16 A"/>
    <property type="chains" value="2/B/b=1-741"/>
</dbReference>
<dbReference type="PDB" id="7BW2">
    <property type="method" value="X-ray"/>
    <property type="resolution" value="6.50 A"/>
    <property type="chains" value="B=2-741"/>
</dbReference>
<dbReference type="PDB" id="7FIX">
    <property type="method" value="EM"/>
    <property type="resolution" value="1.97 A"/>
    <property type="chains" value="B1/B2/B3=1-741"/>
</dbReference>
<dbReference type="PDB" id="7M75">
    <property type="method" value="X-ray"/>
    <property type="resolution" value="2.75 A"/>
    <property type="chains" value="B=2-741"/>
</dbReference>
<dbReference type="PDB" id="7M76">
    <property type="method" value="X-ray"/>
    <property type="resolution" value="3.00 A"/>
    <property type="chains" value="B=2-741"/>
</dbReference>
<dbReference type="PDB" id="7M78">
    <property type="method" value="X-ray"/>
    <property type="resolution" value="3.00 A"/>
    <property type="chains" value="B=2-741"/>
</dbReference>
<dbReference type="PDBsum" id="1C51"/>
<dbReference type="PDBsum" id="1JB0"/>
<dbReference type="PDBsum" id="2PPS"/>
<dbReference type="PDBsum" id="3PCQ"/>
<dbReference type="PDBsum" id="4FE1"/>
<dbReference type="PDBsum" id="5ZF0"/>
<dbReference type="PDBsum" id="6LU1"/>
<dbReference type="PDBsum" id="6PFY"/>
<dbReference type="PDBsum" id="6PGK"/>
<dbReference type="PDBsum" id="6TRA"/>
<dbReference type="PDBsum" id="6TRC"/>
<dbReference type="PDBsum" id="6TRD"/>
<dbReference type="PDBsum" id="7BW2"/>
<dbReference type="PDBsum" id="7FIX"/>
<dbReference type="PDBsum" id="7M75"/>
<dbReference type="PDBsum" id="7M76"/>
<dbReference type="PDBsum" id="7M78"/>
<dbReference type="EMDB" id="EMD-0977"/>
<dbReference type="EMDB" id="EMD-10557"/>
<dbReference type="EMDB" id="EMD-10558"/>
<dbReference type="EMDB" id="EMD-10559"/>
<dbReference type="EMDB" id="EMD-31605"/>
<dbReference type="SMR" id="P0A407"/>
<dbReference type="IntAct" id="P0A407">
    <property type="interactions" value="1"/>
</dbReference>
<dbReference type="STRING" id="197221.gene:10747322"/>
<dbReference type="EnsemblBacteria" id="BAC08283">
    <property type="protein sequence ID" value="BAC08283"/>
    <property type="gene ID" value="BAC08283"/>
</dbReference>
<dbReference type="KEGG" id="tel:tlr0732"/>
<dbReference type="PATRIC" id="fig|197221.4.peg.772"/>
<dbReference type="eggNOG" id="COG2885">
    <property type="taxonomic scope" value="Bacteria"/>
</dbReference>
<dbReference type="BRENDA" id="1.97.1.12">
    <property type="organism ID" value="7763"/>
</dbReference>
<dbReference type="EvolutionaryTrace" id="P0A407"/>
<dbReference type="Proteomes" id="UP000000440">
    <property type="component" value="Chromosome"/>
</dbReference>
<dbReference type="GO" id="GO:0009522">
    <property type="term" value="C:photosystem I"/>
    <property type="evidence" value="ECO:0007669"/>
    <property type="project" value="UniProtKB-KW"/>
</dbReference>
<dbReference type="GO" id="GO:0031676">
    <property type="term" value="C:plasma membrane-derived thylakoid membrane"/>
    <property type="evidence" value="ECO:0007669"/>
    <property type="project" value="UniProtKB-SubCell"/>
</dbReference>
<dbReference type="GO" id="GO:0051539">
    <property type="term" value="F:4 iron, 4 sulfur cluster binding"/>
    <property type="evidence" value="ECO:0007669"/>
    <property type="project" value="UniProtKB-KW"/>
</dbReference>
<dbReference type="GO" id="GO:0016168">
    <property type="term" value="F:chlorophyll binding"/>
    <property type="evidence" value="ECO:0007669"/>
    <property type="project" value="UniProtKB-KW"/>
</dbReference>
<dbReference type="GO" id="GO:0009055">
    <property type="term" value="F:electron transfer activity"/>
    <property type="evidence" value="ECO:0007669"/>
    <property type="project" value="UniProtKB-UniRule"/>
</dbReference>
<dbReference type="GO" id="GO:0000287">
    <property type="term" value="F:magnesium ion binding"/>
    <property type="evidence" value="ECO:0007669"/>
    <property type="project" value="UniProtKB-UniRule"/>
</dbReference>
<dbReference type="GO" id="GO:0016491">
    <property type="term" value="F:oxidoreductase activity"/>
    <property type="evidence" value="ECO:0007669"/>
    <property type="project" value="UniProtKB-KW"/>
</dbReference>
<dbReference type="GO" id="GO:0015979">
    <property type="term" value="P:photosynthesis"/>
    <property type="evidence" value="ECO:0007669"/>
    <property type="project" value="UniProtKB-UniRule"/>
</dbReference>
<dbReference type="FunFam" id="1.20.1130.10:FF:000001">
    <property type="entry name" value="Photosystem I P700 chlorophyll a apoprotein A2"/>
    <property type="match status" value="1"/>
</dbReference>
<dbReference type="Gene3D" id="1.20.1130.10">
    <property type="entry name" value="Photosystem I PsaA/PsaB"/>
    <property type="match status" value="1"/>
</dbReference>
<dbReference type="HAMAP" id="MF_00482">
    <property type="entry name" value="PSI_PsaB"/>
    <property type="match status" value="1"/>
</dbReference>
<dbReference type="InterPro" id="IPR001280">
    <property type="entry name" value="PSI_PsaA/B"/>
</dbReference>
<dbReference type="InterPro" id="IPR020586">
    <property type="entry name" value="PSI_PsaA/B_CS"/>
</dbReference>
<dbReference type="InterPro" id="IPR036408">
    <property type="entry name" value="PSI_PsaA/B_sf"/>
</dbReference>
<dbReference type="InterPro" id="IPR006244">
    <property type="entry name" value="PSI_PsaB"/>
</dbReference>
<dbReference type="NCBIfam" id="TIGR01336">
    <property type="entry name" value="psaB"/>
    <property type="match status" value="1"/>
</dbReference>
<dbReference type="PANTHER" id="PTHR30128">
    <property type="entry name" value="OUTER MEMBRANE PROTEIN, OMPA-RELATED"/>
    <property type="match status" value="1"/>
</dbReference>
<dbReference type="PANTHER" id="PTHR30128:SF19">
    <property type="entry name" value="PHOTOSYSTEM I P700 CHLOROPHYLL A APOPROTEIN A1-RELATED"/>
    <property type="match status" value="1"/>
</dbReference>
<dbReference type="Pfam" id="PF00223">
    <property type="entry name" value="PsaA_PsaB"/>
    <property type="match status" value="1"/>
</dbReference>
<dbReference type="PIRSF" id="PIRSF002905">
    <property type="entry name" value="PSI_A"/>
    <property type="match status" value="1"/>
</dbReference>
<dbReference type="PRINTS" id="PR00257">
    <property type="entry name" value="PHOTSYSPSAAB"/>
</dbReference>
<dbReference type="SUPFAM" id="SSF81558">
    <property type="entry name" value="Photosystem I subunits PsaA/PsaB"/>
    <property type="match status" value="1"/>
</dbReference>
<dbReference type="PROSITE" id="PS00419">
    <property type="entry name" value="PHOTOSYSTEM_I_PSAAB"/>
    <property type="match status" value="1"/>
</dbReference>
<feature type="initiator methionine" description="Removed" evidence="4">
    <location>
        <position position="1"/>
    </location>
</feature>
<feature type="chain" id="PRO_0000088650" description="Photosystem I P700 chlorophyll a apoprotein A2">
    <location>
        <begin position="2"/>
        <end position="741"/>
    </location>
</feature>
<feature type="topological domain" description="Cytoplasmic" evidence="6">
    <location>
        <begin position="2"/>
        <end position="38"/>
    </location>
</feature>
<feature type="transmembrane region" description="Helical; Name=I">
    <location>
        <begin position="39"/>
        <end position="70"/>
    </location>
</feature>
<feature type="topological domain" description="Lumenal, thylakoid" evidence="6">
    <location>
        <begin position="71"/>
        <end position="131"/>
    </location>
</feature>
<feature type="transmembrane region" description="Helical; Name=II">
    <location>
        <begin position="132"/>
        <end position="156"/>
    </location>
</feature>
<feature type="topological domain" description="Cytoplasmic" evidence="6">
    <location>
        <begin position="157"/>
        <end position="172"/>
    </location>
</feature>
<feature type="transmembrane region" description="Helical; Name=III">
    <location>
        <begin position="173"/>
        <end position="195"/>
    </location>
</feature>
<feature type="topological domain" description="Lumenal, thylakoid" evidence="6">
    <location>
        <begin position="196"/>
        <end position="269"/>
    </location>
</feature>
<feature type="transmembrane region" description="Helical; Name=IV">
    <location>
        <begin position="270"/>
        <end position="287"/>
    </location>
</feature>
<feature type="topological domain" description="Cytoplasmic" evidence="6">
    <location>
        <begin position="288"/>
        <end position="334"/>
    </location>
</feature>
<feature type="transmembrane region" description="Helical; Name=V">
    <location>
        <begin position="335"/>
        <end position="358"/>
    </location>
</feature>
<feature type="topological domain" description="Lumenal, thylakoid" evidence="6">
    <location>
        <begin position="359"/>
        <end position="368"/>
    </location>
</feature>
<feature type="transmembrane region" description="Helical; Name=VI">
    <location>
        <begin position="369"/>
        <end position="400"/>
    </location>
</feature>
<feature type="topological domain" description="Cytoplasmic" evidence="6">
    <location>
        <begin position="401"/>
        <end position="419"/>
    </location>
</feature>
<feature type="transmembrane region" description="Helical; Name=VII">
    <location>
        <begin position="420"/>
        <end position="449"/>
    </location>
</feature>
<feature type="topological domain" description="Lumenal, thylakoid" evidence="6">
    <location>
        <begin position="450"/>
        <end position="520"/>
    </location>
</feature>
<feature type="transmembrane region" description="Helical; Name=VIII">
    <location>
        <begin position="521"/>
        <end position="545"/>
    </location>
</feature>
<feature type="topological domain" description="Cytoplasmic" evidence="6">
    <location>
        <begin position="546"/>
        <end position="578"/>
    </location>
</feature>
<feature type="transmembrane region" description="Helical; Name=IX">
    <location>
        <begin position="579"/>
        <end position="610"/>
    </location>
</feature>
<feature type="topological domain" description="Lumenal, thylakoid" evidence="6">
    <location>
        <begin position="611"/>
        <end position="650"/>
    </location>
</feature>
<feature type="transmembrane region" description="Helical; Name=X">
    <location>
        <begin position="651"/>
        <end position="672"/>
    </location>
</feature>
<feature type="topological domain" description="Cytoplasmic" evidence="6">
    <location>
        <begin position="673"/>
        <end position="708"/>
    </location>
</feature>
<feature type="transmembrane region" description="Helical; Name=XI">
    <location>
        <begin position="709"/>
        <end position="737"/>
    </location>
</feature>
<feature type="topological domain" description="Lumenal, thylakoid" evidence="6">
    <location>
        <begin position="738"/>
        <end position="741"/>
    </location>
</feature>
<feature type="binding site" evidence="4">
    <location>
        <position position="566"/>
    </location>
    <ligand>
        <name>[4Fe-4S] cluster</name>
        <dbReference type="ChEBI" id="CHEBI:49883"/>
        <note>ligand shared between dimeric partners</note>
    </ligand>
</feature>
<feature type="binding site" evidence="4">
    <location>
        <position position="575"/>
    </location>
    <ligand>
        <name>[4Fe-4S] cluster</name>
        <dbReference type="ChEBI" id="CHEBI:49883"/>
        <note>ligand shared between dimeric partners</note>
    </ligand>
</feature>
<feature type="binding site" description="axial binding residue" evidence="4">
    <location>
        <position position="661"/>
    </location>
    <ligand>
        <name>chlorophyll a</name>
        <dbReference type="ChEBI" id="CHEBI:58416"/>
        <label>B1</label>
    </ligand>
    <ligandPart>
        <name>Mg</name>
        <dbReference type="ChEBI" id="CHEBI:25107"/>
    </ligandPart>
</feature>
<feature type="binding site" description="axial binding residue" evidence="4">
    <location>
        <position position="669"/>
    </location>
    <ligand>
        <name>chlorophyll a</name>
        <dbReference type="ChEBI" id="CHEBI:58416"/>
        <label>B3</label>
    </ligand>
    <ligandPart>
        <name>Mg</name>
        <dbReference type="ChEBI" id="CHEBI:25107"/>
    </ligandPart>
</feature>
<feature type="binding site" evidence="3 4">
    <location>
        <position position="677"/>
    </location>
    <ligand>
        <name>chlorophyll a</name>
        <dbReference type="ChEBI" id="CHEBI:58416"/>
        <label>B3</label>
    </ligand>
</feature>
<feature type="binding site" evidence="3 4">
    <location>
        <position position="678"/>
    </location>
    <ligand>
        <name>phylloquinone</name>
        <dbReference type="ChEBI" id="CHEBI:18067"/>
        <label>B</label>
    </ligand>
</feature>
<feature type="strand" evidence="9">
    <location>
        <begin position="3"/>
        <end position="6"/>
    </location>
</feature>
<feature type="helix" evidence="7">
    <location>
        <begin position="10"/>
        <end position="13"/>
    </location>
</feature>
<feature type="helix" evidence="7">
    <location>
        <begin position="19"/>
        <end position="27"/>
    </location>
</feature>
<feature type="helix" evidence="7">
    <location>
        <begin position="31"/>
        <end position="33"/>
    </location>
</feature>
<feature type="strand" evidence="9">
    <location>
        <begin position="34"/>
        <end position="36"/>
    </location>
</feature>
<feature type="helix" evidence="7">
    <location>
        <begin position="39"/>
        <end position="71"/>
    </location>
</feature>
<feature type="helix" evidence="7">
    <location>
        <begin position="74"/>
        <end position="79"/>
    </location>
</feature>
<feature type="turn" evidence="7">
    <location>
        <begin position="81"/>
        <end position="83"/>
    </location>
</feature>
<feature type="strand" evidence="7">
    <location>
        <begin position="87"/>
        <end position="90"/>
    </location>
</feature>
<feature type="helix" evidence="7">
    <location>
        <begin position="98"/>
        <end position="104"/>
    </location>
</feature>
<feature type="strand" evidence="7">
    <location>
        <begin position="113"/>
        <end position="115"/>
    </location>
</feature>
<feature type="helix" evidence="7">
    <location>
        <begin position="120"/>
        <end position="126"/>
    </location>
</feature>
<feature type="helix" evidence="7">
    <location>
        <begin position="132"/>
        <end position="155"/>
    </location>
</feature>
<feature type="helix" evidence="7">
    <location>
        <begin position="159"/>
        <end position="161"/>
    </location>
</feature>
<feature type="helix" evidence="7">
    <location>
        <begin position="165"/>
        <end position="168"/>
    </location>
</feature>
<feature type="helix" evidence="7">
    <location>
        <begin position="171"/>
        <end position="180"/>
    </location>
</feature>
<feature type="turn" evidence="7">
    <location>
        <begin position="181"/>
        <end position="183"/>
    </location>
</feature>
<feature type="helix" evidence="7">
    <location>
        <begin position="184"/>
        <end position="196"/>
    </location>
</feature>
<feature type="helix" evidence="7">
    <location>
        <begin position="198"/>
        <end position="202"/>
    </location>
</feature>
<feature type="turn" evidence="7">
    <location>
        <begin position="209"/>
        <end position="211"/>
    </location>
</feature>
<feature type="helix" evidence="7">
    <location>
        <begin position="212"/>
        <end position="214"/>
    </location>
</feature>
<feature type="turn" evidence="11">
    <location>
        <begin position="219"/>
        <end position="222"/>
    </location>
</feature>
<feature type="helix" evidence="7">
    <location>
        <begin position="223"/>
        <end position="226"/>
    </location>
</feature>
<feature type="helix" evidence="7">
    <location>
        <begin position="230"/>
        <end position="234"/>
    </location>
</feature>
<feature type="strand" evidence="8">
    <location>
        <begin position="244"/>
        <end position="246"/>
    </location>
</feature>
<feature type="turn" evidence="7">
    <location>
        <begin position="263"/>
        <end position="265"/>
    </location>
</feature>
<feature type="strand" evidence="10">
    <location>
        <begin position="266"/>
        <end position="268"/>
    </location>
</feature>
<feature type="helix" evidence="7">
    <location>
        <begin position="270"/>
        <end position="287"/>
    </location>
</feature>
<feature type="strand" evidence="11">
    <location>
        <begin position="293"/>
        <end position="296"/>
    </location>
</feature>
<feature type="helix" evidence="7">
    <location>
        <begin position="301"/>
        <end position="306"/>
    </location>
</feature>
<feature type="strand" evidence="12">
    <location>
        <begin position="310"/>
        <end position="313"/>
    </location>
</feature>
<feature type="helix" evidence="7">
    <location>
        <begin position="318"/>
        <end position="320"/>
    </location>
</feature>
<feature type="helix" evidence="7">
    <location>
        <begin position="326"/>
        <end position="332"/>
    </location>
</feature>
<feature type="helix" evidence="7">
    <location>
        <begin position="334"/>
        <end position="358"/>
    </location>
</feature>
<feature type="strand" evidence="10">
    <location>
        <begin position="362"/>
        <end position="364"/>
    </location>
</feature>
<feature type="helix" evidence="7">
    <location>
        <begin position="365"/>
        <end position="367"/>
    </location>
</feature>
<feature type="helix" evidence="7">
    <location>
        <begin position="369"/>
        <end position="400"/>
    </location>
</feature>
<feature type="helix" evidence="7">
    <location>
        <begin position="405"/>
        <end position="407"/>
    </location>
</feature>
<feature type="strand" evidence="8">
    <location>
        <begin position="408"/>
        <end position="410"/>
    </location>
</feature>
<feature type="helix" evidence="7">
    <location>
        <begin position="411"/>
        <end position="417"/>
    </location>
</feature>
<feature type="helix" evidence="7">
    <location>
        <begin position="419"/>
        <end position="449"/>
    </location>
</feature>
<feature type="helix" evidence="7">
    <location>
        <begin position="453"/>
        <end position="455"/>
    </location>
</feature>
<feature type="helix" evidence="7">
    <location>
        <begin position="462"/>
        <end position="470"/>
    </location>
</feature>
<feature type="helix" evidence="7">
    <location>
        <begin position="474"/>
        <end position="476"/>
    </location>
</feature>
<feature type="strand" evidence="12">
    <location>
        <begin position="480"/>
        <end position="484"/>
    </location>
</feature>
<feature type="helix" evidence="7">
    <location>
        <begin position="488"/>
        <end position="491"/>
    </location>
</feature>
<feature type="turn" evidence="7">
    <location>
        <begin position="492"/>
        <end position="495"/>
    </location>
</feature>
<feature type="helix" evidence="7">
    <location>
        <begin position="501"/>
        <end position="509"/>
    </location>
</feature>
<feature type="strand" evidence="7">
    <location>
        <begin position="510"/>
        <end position="513"/>
    </location>
</feature>
<feature type="helix" evidence="7">
    <location>
        <begin position="521"/>
        <end position="546"/>
    </location>
</feature>
<feature type="turn" evidence="11">
    <location>
        <begin position="547"/>
        <end position="549"/>
    </location>
</feature>
<feature type="strand" evidence="9">
    <location>
        <begin position="552"/>
        <end position="554"/>
    </location>
</feature>
<feature type="helix" evidence="7">
    <location>
        <begin position="557"/>
        <end position="560"/>
    </location>
</feature>
<feature type="strand" evidence="14">
    <location>
        <begin position="565"/>
        <end position="567"/>
    </location>
</feature>
<feature type="helix" evidence="7">
    <location>
        <begin position="570"/>
        <end position="572"/>
    </location>
</feature>
<feature type="helix" evidence="7">
    <location>
        <begin position="579"/>
        <end position="610"/>
    </location>
</feature>
<feature type="helix" evidence="7">
    <location>
        <begin position="614"/>
        <end position="619"/>
    </location>
</feature>
<feature type="strand" evidence="13">
    <location>
        <begin position="620"/>
        <end position="622"/>
    </location>
</feature>
<feature type="helix" evidence="7">
    <location>
        <begin position="623"/>
        <end position="629"/>
    </location>
</feature>
<feature type="helix" evidence="7">
    <location>
        <begin position="631"/>
        <end position="634"/>
    </location>
</feature>
<feature type="turn" evidence="7">
    <location>
        <begin position="635"/>
        <end position="637"/>
    </location>
</feature>
<feature type="helix" evidence="7">
    <location>
        <begin position="638"/>
        <end position="640"/>
    </location>
</feature>
<feature type="strand" evidence="7">
    <location>
        <begin position="641"/>
        <end position="643"/>
    </location>
</feature>
<feature type="helix" evidence="7">
    <location>
        <begin position="651"/>
        <end position="672"/>
    </location>
</feature>
<feature type="helix" evidence="7">
    <location>
        <begin position="675"/>
        <end position="690"/>
    </location>
</feature>
<feature type="helix" evidence="7">
    <location>
        <begin position="695"/>
        <end position="697"/>
    </location>
</feature>
<feature type="strand" evidence="7">
    <location>
        <begin position="701"/>
        <end position="703"/>
    </location>
</feature>
<feature type="helix" evidence="7">
    <location>
        <begin position="709"/>
        <end position="737"/>
    </location>
</feature>
<evidence type="ECO:0000250" key="1"/>
<evidence type="ECO:0000269" key="2">
    <source>
    </source>
</evidence>
<evidence type="ECO:0000269" key="3">
    <source>
    </source>
</evidence>
<evidence type="ECO:0000269" key="4">
    <source>
    </source>
</evidence>
<evidence type="ECO:0000269" key="5">
    <source>
    </source>
</evidence>
<evidence type="ECO:0000305" key="6"/>
<evidence type="ECO:0007829" key="7">
    <source>
        <dbReference type="PDB" id="1JB0"/>
    </source>
</evidence>
<evidence type="ECO:0007829" key="8">
    <source>
        <dbReference type="PDB" id="6LU1"/>
    </source>
</evidence>
<evidence type="ECO:0007829" key="9">
    <source>
        <dbReference type="PDB" id="6PFY"/>
    </source>
</evidence>
<evidence type="ECO:0007829" key="10">
    <source>
        <dbReference type="PDB" id="6PGK"/>
    </source>
</evidence>
<evidence type="ECO:0007829" key="11">
    <source>
        <dbReference type="PDB" id="6TRA"/>
    </source>
</evidence>
<evidence type="ECO:0007829" key="12">
    <source>
        <dbReference type="PDB" id="7M75"/>
    </source>
</evidence>
<evidence type="ECO:0007829" key="13">
    <source>
        <dbReference type="PDB" id="7M76"/>
    </source>
</evidence>
<evidence type="ECO:0007829" key="14">
    <source>
        <dbReference type="PDB" id="7M78"/>
    </source>
</evidence>
<accession>P0A407</accession>
<accession>P25897</accession>
<comment type="function">
    <text evidence="2 3 4 5">PsaA and PsaB bind P700, the primary electron donor of photosystem I (PSI), as well as the electron acceptors A0, A1 and FX. PSI is a plastocyanin/cytochrome c6-ferredoxin oxidoreductase, converting photonic excitation into a charge separation, which transfers an electron from the donor P700 chlorophyll pair to the spectroscopically characterized acceptors A0, A1, FX, FA and FB in turn. Oxidized P700 is reduced on the lumenal side of the thylakoid membrane by plastocyanin or cytochrome c6.</text>
</comment>
<comment type="catalytic activity">
    <reaction evidence="2 3 4 5">
        <text>reduced [plastocyanin] + hnu + oxidized [2Fe-2S]-[ferredoxin] = oxidized [plastocyanin] + reduced [2Fe-2S]-[ferredoxin]</text>
        <dbReference type="Rhea" id="RHEA:30407"/>
        <dbReference type="Rhea" id="RHEA-COMP:10000"/>
        <dbReference type="Rhea" id="RHEA-COMP:10001"/>
        <dbReference type="Rhea" id="RHEA-COMP:10039"/>
        <dbReference type="Rhea" id="RHEA-COMP:10040"/>
        <dbReference type="ChEBI" id="CHEBI:29036"/>
        <dbReference type="ChEBI" id="CHEBI:30212"/>
        <dbReference type="ChEBI" id="CHEBI:33737"/>
        <dbReference type="ChEBI" id="CHEBI:33738"/>
        <dbReference type="ChEBI" id="CHEBI:49552"/>
        <dbReference type="EC" id="1.97.1.12"/>
    </reaction>
</comment>
<comment type="cofactor">
    <text evidence="2 3 4 5">PSI electron transfer chain: 5 chlorophyll a, 1 chlorophyll a', 2 phylloquinones and 3 4Fe-4S clusters. PSI core antenna: 90 chlorophyll a, 22 carotenoids, 3 phospholipids and 1 galactolipid. P700 is a chlorophyll a/chlorophyll a' dimer, A0 is one or more chlorophyll a, A1 is one or both phylloquinones and FX is a shared 4Fe-4S iron-sulfur center.</text>
</comment>
<comment type="subunit">
    <text evidence="2 3 4 5">The PsaA/B heterodimer binds the P700 chlorophyll special pair and subsequent electron acceptors. PSI consists of a core antenna complex that captures photons, and an electron transfer chain that converts photonic excitation into a charge separation. The cyanobacterial PSI reaction center is composed of one copy each of PsaA,B,C,D,E,F,I,J,K,L,M and X, and forms trimeric complexes.</text>
</comment>
<comment type="subcellular location">
    <subcellularLocation>
        <location evidence="1">Cellular thylakoid membrane</location>
        <topology evidence="2 3 4 5">Multi-pass membrane protein</topology>
    </subcellularLocation>
</comment>
<comment type="similarity">
    <text evidence="6">Belongs to the PsaA/PsaB family.</text>
</comment>
<proteinExistence type="evidence at protein level"/>
<organism>
    <name type="scientific">Thermosynechococcus vestitus (strain NIES-2133 / IAM M-273 / BP-1)</name>
    <dbReference type="NCBI Taxonomy" id="197221"/>
    <lineage>
        <taxon>Bacteria</taxon>
        <taxon>Bacillati</taxon>
        <taxon>Cyanobacteriota</taxon>
        <taxon>Cyanophyceae</taxon>
        <taxon>Acaryochloridales</taxon>
        <taxon>Thermosynechococcaceae</taxon>
        <taxon>Thermosynechococcus</taxon>
    </lineage>
</organism>